<comment type="subcellular location">
    <subcellularLocation>
        <location evidence="6">Secreted</location>
    </subcellularLocation>
</comment>
<comment type="alternative products">
    <event type="alternative splicing"/>
    <isoform>
        <id>Q19948-1</id>
        <name>a</name>
        <sequence type="displayed"/>
    </isoform>
    <isoform>
        <id>Q19948-2</id>
        <name>b</name>
        <sequence type="described" ref="VSP_007539"/>
    </isoform>
</comment>
<comment type="similarity">
    <text evidence="6">Belongs to the protease inhibitor I33 family.</text>
</comment>
<keyword id="KW-0025">Alternative splicing</keyword>
<keyword id="KW-1015">Disulfide bond</keyword>
<keyword id="KW-0325">Glycoprotein</keyword>
<keyword id="KW-1185">Reference proteome</keyword>
<keyword id="KW-0964">Secreted</keyword>
<keyword id="KW-0732">Signal</keyword>
<sequence length="243" mass="26463">MKLLALVALCAVGVASHRDKRQLSIGTISVSGAGGSTGCVVTGNVLYANGIRLRNLTSSEQSELATYQTEVEQYKTQLRNILSQRRENLRNRLMSQGRNQQQQSNDVSSQGGNDDGSIPKAPEKPSFCTAEDTTQYYFDGCMVQGNKVYVGGQYARDLSSDEISELQTFDTQQTAYQNAVQSQMQSQVQGLFGGSDFLSALFGGDRFNQQQQRQQPSSTTPASTSSTTLPPKPTVPQFCTAIF</sequence>
<organism>
    <name type="scientific">Caenorhabditis elegans</name>
    <dbReference type="NCBI Taxonomy" id="6239"/>
    <lineage>
        <taxon>Eukaryota</taxon>
        <taxon>Metazoa</taxon>
        <taxon>Ecdysozoa</taxon>
        <taxon>Nematoda</taxon>
        <taxon>Chromadorea</taxon>
        <taxon>Rhabditida</taxon>
        <taxon>Rhabditina</taxon>
        <taxon>Rhabditomorpha</taxon>
        <taxon>Rhabditoidea</taxon>
        <taxon>Rhabditidae</taxon>
        <taxon>Peloderinae</taxon>
        <taxon>Caenorhabditis</taxon>
    </lineage>
</organism>
<reference key="1">
    <citation type="journal article" date="1998" name="Science">
        <title>Genome sequence of the nematode C. elegans: a platform for investigating biology.</title>
        <authorList>
            <consortium name="The C. elegans sequencing consortium"/>
        </authorList>
    </citation>
    <scope>NUCLEOTIDE SEQUENCE [LARGE SCALE GENOMIC DNA]</scope>
    <scope>ALTERNATIVE SPLICING</scope>
    <source>
        <strain>Bristol N2</strain>
    </source>
</reference>
<reference key="2">
    <citation type="journal article" date="2003" name="Nat. Biotechnol.">
        <title>Lectin affinity capture, isotope-coded tagging and mass spectrometry to identify N-linked glycoproteins.</title>
        <authorList>
            <person name="Kaji H."/>
            <person name="Saito H."/>
            <person name="Yamauchi Y."/>
            <person name="Shinkawa T."/>
            <person name="Taoka M."/>
            <person name="Hirabayashi J."/>
            <person name="Kasai K."/>
            <person name="Takahashi N."/>
            <person name="Isobe T."/>
        </authorList>
    </citation>
    <scope>GLYCOSYLATION [LARGE SCALE ANALYSIS] AT ASN-55</scope>
    <scope>IDENTIFICATION BY MASS SPECTROMETRY</scope>
    <source>
        <strain>Bristol N2</strain>
    </source>
</reference>
<reference key="3">
    <citation type="journal article" date="2007" name="Mol. Cell. Proteomics">
        <title>Proteomics reveals N-linked glycoprotein diversity in Caenorhabditis elegans and suggests an atypical translocation mechanism for integral membrane proteins.</title>
        <authorList>
            <person name="Kaji H."/>
            <person name="Kamiie J."/>
            <person name="Kawakami H."/>
            <person name="Kido K."/>
            <person name="Yamauchi Y."/>
            <person name="Shinkawa T."/>
            <person name="Taoka M."/>
            <person name="Takahashi N."/>
            <person name="Isobe T."/>
        </authorList>
    </citation>
    <scope>GLYCOSYLATION [LARGE SCALE ANALYSIS] AT ASN-55</scope>
    <scope>IDENTIFICATION BY MASS SPECTROMETRY</scope>
    <source>
        <strain>Bristol N2</strain>
    </source>
</reference>
<accession>Q19948</accession>
<accession>Q8IG24</accession>
<feature type="signal peptide" evidence="2">
    <location>
        <begin position="1"/>
        <end position="16"/>
    </location>
</feature>
<feature type="chain" id="PRO_0000002401" description="Uncharacterized protein F32A5.4">
    <location>
        <begin position="17"/>
        <end position="243"/>
    </location>
</feature>
<feature type="region of interest" description="Disordered" evidence="3">
    <location>
        <begin position="95"/>
        <end position="126"/>
    </location>
</feature>
<feature type="region of interest" description="Disordered" evidence="3">
    <location>
        <begin position="208"/>
        <end position="235"/>
    </location>
</feature>
<feature type="compositionally biased region" description="Low complexity" evidence="3">
    <location>
        <begin position="99"/>
        <end position="112"/>
    </location>
</feature>
<feature type="compositionally biased region" description="Low complexity" evidence="3">
    <location>
        <begin position="209"/>
        <end position="229"/>
    </location>
</feature>
<feature type="glycosylation site" description="N-linked (GlcNAc...) asparagine" evidence="4 5">
    <location>
        <position position="55"/>
    </location>
</feature>
<feature type="disulfide bond" evidence="1">
    <location>
        <begin position="141"/>
        <end position="239"/>
    </location>
</feature>
<feature type="splice variant" id="VSP_007539" description="In isoform b." evidence="6">
    <original>MKLLALVALCAVGVASHRDKRQLSIGTISVSGAGGSTGCVVTGNVLYANGIRLRNLTSSEQSELATYQTEVEQYKT</original>
    <variation>MTWHFFQ</variation>
    <location>
        <begin position="1"/>
        <end position="76"/>
    </location>
</feature>
<evidence type="ECO:0000250" key="1"/>
<evidence type="ECO:0000255" key="2"/>
<evidence type="ECO:0000256" key="3">
    <source>
        <dbReference type="SAM" id="MobiDB-lite"/>
    </source>
</evidence>
<evidence type="ECO:0000269" key="4">
    <source>
    </source>
</evidence>
<evidence type="ECO:0000269" key="5">
    <source>
    </source>
</evidence>
<evidence type="ECO:0000305" key="6"/>
<proteinExistence type="evidence at protein level"/>
<protein>
    <recommendedName>
        <fullName>Uncharacterized protein F32A5.4</fullName>
    </recommendedName>
</protein>
<name>YPP4_CAEEL</name>
<dbReference type="EMBL" id="FO080735">
    <property type="protein sequence ID" value="CCD66274.1"/>
    <property type="molecule type" value="Genomic_DNA"/>
</dbReference>
<dbReference type="EMBL" id="FO080735">
    <property type="protein sequence ID" value="CCD66275.1"/>
    <property type="molecule type" value="Genomic_DNA"/>
</dbReference>
<dbReference type="PIR" id="T16229">
    <property type="entry name" value="T16229"/>
</dbReference>
<dbReference type="RefSeq" id="NP_495508.1">
    <molecule id="Q19948-1"/>
    <property type="nucleotide sequence ID" value="NM_063107.4"/>
</dbReference>
<dbReference type="RefSeq" id="NP_871977.1">
    <molecule id="Q19948-2"/>
    <property type="nucleotide sequence ID" value="NM_182177.4"/>
</dbReference>
<dbReference type="SMR" id="Q19948"/>
<dbReference type="BioGRID" id="39524">
    <property type="interactions" value="8"/>
</dbReference>
<dbReference type="FunCoup" id="Q19948">
    <property type="interactions" value="223"/>
</dbReference>
<dbReference type="STRING" id="6239.F32A5.4a.2"/>
<dbReference type="MEROPS" id="I33.002"/>
<dbReference type="iPTMnet" id="Q19948"/>
<dbReference type="PaxDb" id="6239-F32A5.4a.2"/>
<dbReference type="PeptideAtlas" id="Q19948"/>
<dbReference type="EnsemblMetazoa" id="F32A5.4a.1">
    <molecule id="Q19948-1"/>
    <property type="protein sequence ID" value="F32A5.4a.1"/>
    <property type="gene ID" value="WBGene00017970"/>
</dbReference>
<dbReference type="EnsemblMetazoa" id="F32A5.4b.1">
    <molecule id="Q19948-2"/>
    <property type="protein sequence ID" value="F32A5.4b.1"/>
    <property type="gene ID" value="WBGene00017970"/>
</dbReference>
<dbReference type="GeneID" id="174188"/>
<dbReference type="KEGG" id="cel:CELE_F32A5.4"/>
<dbReference type="UCSC" id="F32A5.4a.1">
    <molecule id="Q19948-1"/>
    <property type="organism name" value="c. elegans"/>
</dbReference>
<dbReference type="AGR" id="WB:WBGene00017970"/>
<dbReference type="CTD" id="174188"/>
<dbReference type="WormBase" id="F32A5.4a">
    <molecule id="Q19948-1"/>
    <property type="protein sequence ID" value="CE01274"/>
    <property type="gene ID" value="WBGene00017970"/>
</dbReference>
<dbReference type="WormBase" id="F32A5.4b">
    <molecule id="Q19948-2"/>
    <property type="protein sequence ID" value="CE32640"/>
    <property type="gene ID" value="WBGene00017970"/>
</dbReference>
<dbReference type="eggNOG" id="ENOG502S3IQ">
    <property type="taxonomic scope" value="Eukaryota"/>
</dbReference>
<dbReference type="GeneTree" id="ENSGT00970000196274"/>
<dbReference type="HOGENOM" id="CLU_099985_0_0_1"/>
<dbReference type="InParanoid" id="Q19948"/>
<dbReference type="OMA" id="YFDGCMV"/>
<dbReference type="OrthoDB" id="5828355at2759"/>
<dbReference type="PRO" id="PR:Q19948"/>
<dbReference type="Proteomes" id="UP000001940">
    <property type="component" value="Chromosome II"/>
</dbReference>
<dbReference type="Bgee" id="WBGene00017970">
    <property type="expression patterns" value="Expressed in larva and 3 other cell types or tissues"/>
</dbReference>
<dbReference type="GO" id="GO:0005576">
    <property type="term" value="C:extracellular region"/>
    <property type="evidence" value="ECO:0007669"/>
    <property type="project" value="UniProtKB-SubCell"/>
</dbReference>
<dbReference type="CDD" id="cd00225">
    <property type="entry name" value="API3"/>
    <property type="match status" value="1"/>
</dbReference>
<dbReference type="Gene3D" id="3.30.1120.50">
    <property type="entry name" value="Pepsin inhibitor-3"/>
    <property type="match status" value="2"/>
</dbReference>
<dbReference type="InterPro" id="IPR010480">
    <property type="entry name" value="Pepsin-I3"/>
</dbReference>
<dbReference type="InterPro" id="IPR038412">
    <property type="entry name" value="Pepsin-I3_sf"/>
</dbReference>
<dbReference type="InterPro" id="IPR051901">
    <property type="entry name" value="Protease_Inhibitor_I33"/>
</dbReference>
<dbReference type="PANTHER" id="PTHR37969">
    <property type="entry name" value="PROTEIN CBG07421-RELATED"/>
    <property type="match status" value="1"/>
</dbReference>
<dbReference type="PANTHER" id="PTHR37969:SF1">
    <property type="entry name" value="PROTEIN CBG13105"/>
    <property type="match status" value="1"/>
</dbReference>
<dbReference type="Pfam" id="PF06394">
    <property type="entry name" value="Pepsin-I3"/>
    <property type="match status" value="2"/>
</dbReference>
<dbReference type="SUPFAM" id="SSF55149">
    <property type="entry name" value="Pepsin inhibitor-3"/>
    <property type="match status" value="1"/>
</dbReference>
<gene>
    <name type="ORF">F32A5.4</name>
</gene>